<keyword id="KW-0520">NAD</keyword>
<keyword id="KW-0560">Oxidoreductase</keyword>
<keyword id="KW-1185">Reference proteome</keyword>
<organism>
    <name type="scientific">Streptomyces coelicolor (strain ATCC BAA-471 / A3(2) / M145)</name>
    <dbReference type="NCBI Taxonomy" id="100226"/>
    <lineage>
        <taxon>Bacteria</taxon>
        <taxon>Bacillati</taxon>
        <taxon>Actinomycetota</taxon>
        <taxon>Actinomycetes</taxon>
        <taxon>Kitasatosporales</taxon>
        <taxon>Streptomycetaceae</taxon>
        <taxon>Streptomyces</taxon>
        <taxon>Streptomyces albidoflavus group</taxon>
    </lineage>
</organism>
<accession>Q9RJZ6</accession>
<protein>
    <recommendedName>
        <fullName>Probable aldehyde dehydrogenase</fullName>
        <ecNumber>1.2.1.3</ecNumber>
    </recommendedName>
</protein>
<gene>
    <name type="ordered locus">SCO1174</name>
    <name type="ORF">SCG11A.05</name>
</gene>
<name>ALDH_STRCO</name>
<evidence type="ECO:0000250" key="1"/>
<evidence type="ECO:0000305" key="2"/>
<sequence length="507" mass="55674">MTRYAAPGTEGAIVSYQSRYDHFIGGEYVPPARGQYFENPSPVNGLPFTEIARGTADDVERALDAAHEAAPGWGRTSVTERSDILLKIADRMEANLERLAVAESWENGKPVRETLAADIPLAIDHFRYFAGAVRAQEGSLGEIDDDTVAYHFHEPLGVVAQIIPWNFPILMATWKLAPALAAGNAVVLKPAEQTPASIHYWLSLVADLLPPGVLNVVNGFGVEAGKPLASSPRVAKVAFTGETTTGRLIMQYASENIKPVTLELGGKSPNIFFEDVWARDDDFRDKALEGFTMFALNQGEVCTCPSRALVQRGVYAEFMEAAVARTELIKPGHPLDTDTMIGAQASNDQLEKILSYLDIGRQEGAKVLTGGERIEHDGELKGGYYVQPTIFEGHNRMRIFQEEIFGPVVSVTSFDDFDDAVKTANDTLYGLGAGVWTRDMNTAYRAGRAIQAGRVWTNCYHAYPAHAAFGGYKQSGIGRENHKMMLEHYQQTKNILCSYSPKKLGFF</sequence>
<dbReference type="EC" id="1.2.1.3"/>
<dbReference type="EMBL" id="AL939108">
    <property type="protein sequence ID" value="CAB61586.1"/>
    <property type="molecule type" value="Genomic_DNA"/>
</dbReference>
<dbReference type="RefSeq" id="NP_625464.1">
    <property type="nucleotide sequence ID" value="NC_003888.3"/>
</dbReference>
<dbReference type="RefSeq" id="WP_011027628.1">
    <property type="nucleotide sequence ID" value="NZ_VNID01000006.1"/>
</dbReference>
<dbReference type="SMR" id="Q9RJZ6"/>
<dbReference type="FunCoup" id="Q9RJZ6">
    <property type="interactions" value="265"/>
</dbReference>
<dbReference type="STRING" id="100226.gene:17758757"/>
<dbReference type="PaxDb" id="100226-SCO1174"/>
<dbReference type="KEGG" id="sco:SCO1174"/>
<dbReference type="PATRIC" id="fig|100226.15.peg.1172"/>
<dbReference type="eggNOG" id="COG1012">
    <property type="taxonomic scope" value="Bacteria"/>
</dbReference>
<dbReference type="HOGENOM" id="CLU_005391_0_2_11"/>
<dbReference type="InParanoid" id="Q9RJZ6"/>
<dbReference type="OrthoDB" id="6882680at2"/>
<dbReference type="PhylomeDB" id="Q9RJZ6"/>
<dbReference type="Proteomes" id="UP000001973">
    <property type="component" value="Chromosome"/>
</dbReference>
<dbReference type="GO" id="GO:0004029">
    <property type="term" value="F:aldehyde dehydrogenase (NAD+) activity"/>
    <property type="evidence" value="ECO:0007669"/>
    <property type="project" value="UniProtKB-EC"/>
</dbReference>
<dbReference type="CDD" id="cd07116">
    <property type="entry name" value="ALDH_ACDHII-AcoD"/>
    <property type="match status" value="1"/>
</dbReference>
<dbReference type="FunFam" id="3.40.605.10:FF:000001">
    <property type="entry name" value="Aldehyde dehydrogenase 1"/>
    <property type="match status" value="1"/>
</dbReference>
<dbReference type="FunFam" id="3.40.309.10:FF:000017">
    <property type="entry name" value="Aldehyde dehydrogenase B"/>
    <property type="match status" value="1"/>
</dbReference>
<dbReference type="Gene3D" id="3.40.605.10">
    <property type="entry name" value="Aldehyde Dehydrogenase, Chain A, domain 1"/>
    <property type="match status" value="1"/>
</dbReference>
<dbReference type="Gene3D" id="3.40.309.10">
    <property type="entry name" value="Aldehyde Dehydrogenase, Chain A, domain 2"/>
    <property type="match status" value="1"/>
</dbReference>
<dbReference type="InterPro" id="IPR016161">
    <property type="entry name" value="Ald_DH/histidinol_DH"/>
</dbReference>
<dbReference type="InterPro" id="IPR016163">
    <property type="entry name" value="Ald_DH_C"/>
</dbReference>
<dbReference type="InterPro" id="IPR016160">
    <property type="entry name" value="Ald_DH_CS_CYS"/>
</dbReference>
<dbReference type="InterPro" id="IPR029510">
    <property type="entry name" value="Ald_DH_CS_GLU"/>
</dbReference>
<dbReference type="InterPro" id="IPR016162">
    <property type="entry name" value="Ald_DH_N"/>
</dbReference>
<dbReference type="InterPro" id="IPR015590">
    <property type="entry name" value="Aldehyde_DH_dom"/>
</dbReference>
<dbReference type="PANTHER" id="PTHR43111">
    <property type="entry name" value="ALDEHYDE DEHYDROGENASE B-RELATED"/>
    <property type="match status" value="1"/>
</dbReference>
<dbReference type="PANTHER" id="PTHR43111:SF1">
    <property type="entry name" value="ALDEHYDE DEHYDROGENASE B-RELATED"/>
    <property type="match status" value="1"/>
</dbReference>
<dbReference type="Pfam" id="PF00171">
    <property type="entry name" value="Aldedh"/>
    <property type="match status" value="1"/>
</dbReference>
<dbReference type="SUPFAM" id="SSF53720">
    <property type="entry name" value="ALDH-like"/>
    <property type="match status" value="1"/>
</dbReference>
<dbReference type="PROSITE" id="PS00070">
    <property type="entry name" value="ALDEHYDE_DEHYDR_CYS"/>
    <property type="match status" value="1"/>
</dbReference>
<dbReference type="PROSITE" id="PS00687">
    <property type="entry name" value="ALDEHYDE_DEHYDR_GLU"/>
    <property type="match status" value="1"/>
</dbReference>
<reference key="1">
    <citation type="journal article" date="2002" name="Nature">
        <title>Complete genome sequence of the model actinomycete Streptomyces coelicolor A3(2).</title>
        <authorList>
            <person name="Bentley S.D."/>
            <person name="Chater K.F."/>
            <person name="Cerdeno-Tarraga A.-M."/>
            <person name="Challis G.L."/>
            <person name="Thomson N.R."/>
            <person name="James K.D."/>
            <person name="Harris D.E."/>
            <person name="Quail M.A."/>
            <person name="Kieser H."/>
            <person name="Harper D."/>
            <person name="Bateman A."/>
            <person name="Brown S."/>
            <person name="Chandra G."/>
            <person name="Chen C.W."/>
            <person name="Collins M."/>
            <person name="Cronin A."/>
            <person name="Fraser A."/>
            <person name="Goble A."/>
            <person name="Hidalgo J."/>
            <person name="Hornsby T."/>
            <person name="Howarth S."/>
            <person name="Huang C.-H."/>
            <person name="Kieser T."/>
            <person name="Larke L."/>
            <person name="Murphy L.D."/>
            <person name="Oliver K."/>
            <person name="O'Neil S."/>
            <person name="Rabbinowitsch E."/>
            <person name="Rajandream M.A."/>
            <person name="Rutherford K.M."/>
            <person name="Rutter S."/>
            <person name="Seeger K."/>
            <person name="Saunders D."/>
            <person name="Sharp S."/>
            <person name="Squares R."/>
            <person name="Squares S."/>
            <person name="Taylor K."/>
            <person name="Warren T."/>
            <person name="Wietzorrek A."/>
            <person name="Woodward J.R."/>
            <person name="Barrell B.G."/>
            <person name="Parkhill J."/>
            <person name="Hopwood D.A."/>
        </authorList>
    </citation>
    <scope>NUCLEOTIDE SEQUENCE [LARGE SCALE GENOMIC DNA]</scope>
    <source>
        <strain>ATCC BAA-471 / A3(2) / M145</strain>
    </source>
</reference>
<feature type="chain" id="PRO_0000056464" description="Probable aldehyde dehydrogenase">
    <location>
        <begin position="1"/>
        <end position="507"/>
    </location>
</feature>
<feature type="active site" evidence="1">
    <location>
        <position position="263"/>
    </location>
</feature>
<feature type="active site" evidence="1">
    <location>
        <position position="302"/>
    </location>
</feature>
<feature type="binding site" evidence="1">
    <location>
        <begin position="219"/>
        <end position="225"/>
    </location>
    <ligand>
        <name>NAD(+)</name>
        <dbReference type="ChEBI" id="CHEBI:57540"/>
    </ligand>
</feature>
<comment type="catalytic activity">
    <reaction>
        <text>an aldehyde + NAD(+) + H2O = a carboxylate + NADH + 2 H(+)</text>
        <dbReference type="Rhea" id="RHEA:16185"/>
        <dbReference type="ChEBI" id="CHEBI:15377"/>
        <dbReference type="ChEBI" id="CHEBI:15378"/>
        <dbReference type="ChEBI" id="CHEBI:17478"/>
        <dbReference type="ChEBI" id="CHEBI:29067"/>
        <dbReference type="ChEBI" id="CHEBI:57540"/>
        <dbReference type="ChEBI" id="CHEBI:57945"/>
        <dbReference type="EC" id="1.2.1.3"/>
    </reaction>
</comment>
<comment type="similarity">
    <text evidence="2">Belongs to the aldehyde dehydrogenase family.</text>
</comment>
<proteinExistence type="inferred from homology"/>